<sequence length="618" mass="64991">MALLQISEPGQAPDPHQRRIAVGIDLGTTHSLVAAVRNGVAECLPDDQGRVILPSAVRYLDRERRQIGFDALAARAQDAANTITSVKRLMGRGLADIANRESMSYRLVDEGGMVKVETAAGIKSPVEISAEILATLRYRAEDTFDGELYGAVITVPAYFDEGQRQATKDAAQLAGLNVLRLISEPTAAAIAYGLDNASEGVYAVYDLGGGTFDISILRLTQGVFEVIATGGDSALGGDDYDHALADFVLAQTGLQVGSDADKAAVLVAARAAKEALTDADSVAFHAKLAGGAARFDLARAQFDAATKPLTDRTIAAVRKALRDAKLKPDDLQGIVLVGGSTRMPQIRRAVAEFFGREPLVNLNPDEVVALGAAIQANQLAGNNGAGDLLLLDVIPLSLGIETMGGLVERIVPRNQTIPTAMAQDFTTYQDGQTALALHVVQGERDLVADCRSLARFTLRGIPPMAAGAARIRVTFTVDADGLLSVSAKEQGSGVEASVAVKPSYGLSDDQIATMLQESFSTAQQDMQARALVEARVDAERMLLATQSALDADGDLLGEEERAVIDASMAKLREAAKGNDAAAIEGATKALANDTEAFAAQRMNAGIARALSGRKLESL</sequence>
<accession>C5CXC5</accession>
<proteinExistence type="inferred from homology"/>
<feature type="chain" id="PRO_1000212535" description="Chaperone protein HscA homolog">
    <location>
        <begin position="1"/>
        <end position="618"/>
    </location>
</feature>
<keyword id="KW-0067">ATP-binding</keyword>
<keyword id="KW-0143">Chaperone</keyword>
<keyword id="KW-0547">Nucleotide-binding</keyword>
<organism>
    <name type="scientific">Variovorax paradoxus (strain S110)</name>
    <dbReference type="NCBI Taxonomy" id="543728"/>
    <lineage>
        <taxon>Bacteria</taxon>
        <taxon>Pseudomonadati</taxon>
        <taxon>Pseudomonadota</taxon>
        <taxon>Betaproteobacteria</taxon>
        <taxon>Burkholderiales</taxon>
        <taxon>Comamonadaceae</taxon>
        <taxon>Variovorax</taxon>
    </lineage>
</organism>
<dbReference type="EMBL" id="CP001635">
    <property type="protein sequence ID" value="ACS18781.1"/>
    <property type="molecule type" value="Genomic_DNA"/>
</dbReference>
<dbReference type="SMR" id="C5CXC5"/>
<dbReference type="STRING" id="543728.Vapar_2146"/>
<dbReference type="KEGG" id="vap:Vapar_2146"/>
<dbReference type="eggNOG" id="COG0443">
    <property type="taxonomic scope" value="Bacteria"/>
</dbReference>
<dbReference type="HOGENOM" id="CLU_005965_2_4_4"/>
<dbReference type="OrthoDB" id="9766019at2"/>
<dbReference type="GO" id="GO:0005524">
    <property type="term" value="F:ATP binding"/>
    <property type="evidence" value="ECO:0007669"/>
    <property type="project" value="UniProtKB-KW"/>
</dbReference>
<dbReference type="GO" id="GO:0016887">
    <property type="term" value="F:ATP hydrolysis activity"/>
    <property type="evidence" value="ECO:0007669"/>
    <property type="project" value="UniProtKB-UniRule"/>
</dbReference>
<dbReference type="GO" id="GO:0140662">
    <property type="term" value="F:ATP-dependent protein folding chaperone"/>
    <property type="evidence" value="ECO:0007669"/>
    <property type="project" value="InterPro"/>
</dbReference>
<dbReference type="GO" id="GO:0051082">
    <property type="term" value="F:unfolded protein binding"/>
    <property type="evidence" value="ECO:0007669"/>
    <property type="project" value="InterPro"/>
</dbReference>
<dbReference type="GO" id="GO:0016226">
    <property type="term" value="P:iron-sulfur cluster assembly"/>
    <property type="evidence" value="ECO:0007669"/>
    <property type="project" value="InterPro"/>
</dbReference>
<dbReference type="FunFam" id="3.30.420.40:FF:000046">
    <property type="entry name" value="Chaperone protein HscA"/>
    <property type="match status" value="1"/>
</dbReference>
<dbReference type="FunFam" id="2.60.34.10:FF:000005">
    <property type="entry name" value="Chaperone protein HscA homolog"/>
    <property type="match status" value="1"/>
</dbReference>
<dbReference type="Gene3D" id="1.20.1270.10">
    <property type="match status" value="1"/>
</dbReference>
<dbReference type="Gene3D" id="3.30.420.40">
    <property type="match status" value="2"/>
</dbReference>
<dbReference type="Gene3D" id="3.90.640.10">
    <property type="entry name" value="Actin, Chain A, domain 4"/>
    <property type="match status" value="1"/>
</dbReference>
<dbReference type="Gene3D" id="2.60.34.10">
    <property type="entry name" value="Substrate Binding Domain Of DNAk, Chain A, domain 1"/>
    <property type="match status" value="1"/>
</dbReference>
<dbReference type="HAMAP" id="MF_00679">
    <property type="entry name" value="HscA"/>
    <property type="match status" value="1"/>
</dbReference>
<dbReference type="InterPro" id="IPR043129">
    <property type="entry name" value="ATPase_NBD"/>
</dbReference>
<dbReference type="InterPro" id="IPR018181">
    <property type="entry name" value="Heat_shock_70_CS"/>
</dbReference>
<dbReference type="InterPro" id="IPR029048">
    <property type="entry name" value="HSP70_C_sf"/>
</dbReference>
<dbReference type="InterPro" id="IPR029047">
    <property type="entry name" value="HSP70_peptide-bd_sf"/>
</dbReference>
<dbReference type="InterPro" id="IPR013126">
    <property type="entry name" value="Hsp_70_fam"/>
</dbReference>
<dbReference type="InterPro" id="IPR010236">
    <property type="entry name" value="ISC_FeS_clus_asmbl_HscA"/>
</dbReference>
<dbReference type="NCBIfam" id="TIGR01991">
    <property type="entry name" value="HscA"/>
    <property type="match status" value="1"/>
</dbReference>
<dbReference type="NCBIfam" id="NF003520">
    <property type="entry name" value="PRK05183.1"/>
    <property type="match status" value="1"/>
</dbReference>
<dbReference type="PANTHER" id="PTHR19375">
    <property type="entry name" value="HEAT SHOCK PROTEIN 70KDA"/>
    <property type="match status" value="1"/>
</dbReference>
<dbReference type="Pfam" id="PF00012">
    <property type="entry name" value="HSP70"/>
    <property type="match status" value="1"/>
</dbReference>
<dbReference type="PRINTS" id="PR00301">
    <property type="entry name" value="HEATSHOCK70"/>
</dbReference>
<dbReference type="SUPFAM" id="SSF53067">
    <property type="entry name" value="Actin-like ATPase domain"/>
    <property type="match status" value="2"/>
</dbReference>
<dbReference type="SUPFAM" id="SSF100934">
    <property type="entry name" value="Heat shock protein 70kD (HSP70), C-terminal subdomain"/>
    <property type="match status" value="1"/>
</dbReference>
<dbReference type="SUPFAM" id="SSF100920">
    <property type="entry name" value="Heat shock protein 70kD (HSP70), peptide-binding domain"/>
    <property type="match status" value="1"/>
</dbReference>
<dbReference type="PROSITE" id="PS00297">
    <property type="entry name" value="HSP70_1"/>
    <property type="match status" value="1"/>
</dbReference>
<dbReference type="PROSITE" id="PS00329">
    <property type="entry name" value="HSP70_2"/>
    <property type="match status" value="1"/>
</dbReference>
<dbReference type="PROSITE" id="PS01036">
    <property type="entry name" value="HSP70_3"/>
    <property type="match status" value="1"/>
</dbReference>
<evidence type="ECO:0000255" key="1">
    <source>
        <dbReference type="HAMAP-Rule" id="MF_00679"/>
    </source>
</evidence>
<comment type="function">
    <text evidence="1">Chaperone involved in the maturation of iron-sulfur cluster-containing proteins. Has a low intrinsic ATPase activity which is markedly stimulated by HscB.</text>
</comment>
<comment type="similarity">
    <text evidence="1">Belongs to the heat shock protein 70 family.</text>
</comment>
<protein>
    <recommendedName>
        <fullName evidence="1">Chaperone protein HscA homolog</fullName>
    </recommendedName>
</protein>
<reference key="1">
    <citation type="journal article" date="2011" name="J. Bacteriol.">
        <title>Complete genome sequence of the metabolically versatile plant growth-promoting endophyte, Variovorax paradoxus S110.</title>
        <authorList>
            <person name="Han J.I."/>
            <person name="Choi H.K."/>
            <person name="Lee S.W."/>
            <person name="Orwin P.M."/>
            <person name="Kim J."/>
            <person name="Laroe S.L."/>
            <person name="Kim T.G."/>
            <person name="O'Neil J."/>
            <person name="Leadbetter J.R."/>
            <person name="Lee S.Y."/>
            <person name="Hur C.G."/>
            <person name="Spain J.C."/>
            <person name="Ovchinnikova G."/>
            <person name="Goodwin L."/>
            <person name="Han C."/>
        </authorList>
    </citation>
    <scope>NUCLEOTIDE SEQUENCE [LARGE SCALE GENOMIC DNA]</scope>
    <source>
        <strain>S110</strain>
    </source>
</reference>
<name>HSCA_VARPS</name>
<gene>
    <name evidence="1" type="primary">hscA</name>
    <name type="ordered locus">Vapar_2146</name>
</gene>